<reference key="1">
    <citation type="submission" date="2008-02" db="EMBL/GenBank/DDBJ databases">
        <title>Complete sequence of Shewanella woodyi ATCC 51908.</title>
        <authorList>
            <consortium name="US DOE Joint Genome Institute"/>
            <person name="Copeland A."/>
            <person name="Lucas S."/>
            <person name="Lapidus A."/>
            <person name="Glavina del Rio T."/>
            <person name="Dalin E."/>
            <person name="Tice H."/>
            <person name="Bruce D."/>
            <person name="Goodwin L."/>
            <person name="Pitluck S."/>
            <person name="Sims D."/>
            <person name="Brettin T."/>
            <person name="Detter J.C."/>
            <person name="Han C."/>
            <person name="Kuske C.R."/>
            <person name="Schmutz J."/>
            <person name="Larimer F."/>
            <person name="Land M."/>
            <person name="Hauser L."/>
            <person name="Kyrpides N."/>
            <person name="Lykidis A."/>
            <person name="Zhao J.-S."/>
            <person name="Richardson P."/>
        </authorList>
    </citation>
    <scope>NUCLEOTIDE SEQUENCE [LARGE SCALE GENOMIC DNA]</scope>
    <source>
        <strain>ATCC 51908 / MS32</strain>
    </source>
</reference>
<dbReference type="EC" id="2.1.1.174" evidence="1"/>
<dbReference type="EMBL" id="CP000961">
    <property type="protein sequence ID" value="ACA87889.1"/>
    <property type="molecule type" value="Genomic_DNA"/>
</dbReference>
<dbReference type="RefSeq" id="WP_012326222.1">
    <property type="nucleotide sequence ID" value="NC_010506.1"/>
</dbReference>
<dbReference type="SMR" id="B1KD54"/>
<dbReference type="STRING" id="392500.Swoo_3625"/>
<dbReference type="KEGG" id="swd:Swoo_3625"/>
<dbReference type="eggNOG" id="COG2813">
    <property type="taxonomic scope" value="Bacteria"/>
</dbReference>
<dbReference type="HOGENOM" id="CLU_040288_4_0_6"/>
<dbReference type="Proteomes" id="UP000002168">
    <property type="component" value="Chromosome"/>
</dbReference>
<dbReference type="GO" id="GO:0005737">
    <property type="term" value="C:cytoplasm"/>
    <property type="evidence" value="ECO:0007669"/>
    <property type="project" value="UniProtKB-SubCell"/>
</dbReference>
<dbReference type="GO" id="GO:0052916">
    <property type="term" value="F:23S rRNA (guanine(1835)-N(2))-methyltransferase activity"/>
    <property type="evidence" value="ECO:0007669"/>
    <property type="project" value="UniProtKB-EC"/>
</dbReference>
<dbReference type="GO" id="GO:0003676">
    <property type="term" value="F:nucleic acid binding"/>
    <property type="evidence" value="ECO:0007669"/>
    <property type="project" value="InterPro"/>
</dbReference>
<dbReference type="CDD" id="cd02440">
    <property type="entry name" value="AdoMet_MTases"/>
    <property type="match status" value="1"/>
</dbReference>
<dbReference type="Gene3D" id="3.40.50.150">
    <property type="entry name" value="Vaccinia Virus protein VP39"/>
    <property type="match status" value="2"/>
</dbReference>
<dbReference type="HAMAP" id="MF_01859">
    <property type="entry name" value="23SrRNA_methyltr_G"/>
    <property type="match status" value="1"/>
</dbReference>
<dbReference type="InterPro" id="IPR002052">
    <property type="entry name" value="DNA_methylase_N6_adenine_CS"/>
</dbReference>
<dbReference type="InterPro" id="IPR017237">
    <property type="entry name" value="rRNA_m2G-MeTrfase_RlmG"/>
</dbReference>
<dbReference type="InterPro" id="IPR046977">
    <property type="entry name" value="RsmC/RlmG"/>
</dbReference>
<dbReference type="InterPro" id="IPR029063">
    <property type="entry name" value="SAM-dependent_MTases_sf"/>
</dbReference>
<dbReference type="InterPro" id="IPR007848">
    <property type="entry name" value="Small_mtfrase_dom"/>
</dbReference>
<dbReference type="PANTHER" id="PTHR47816:SF5">
    <property type="entry name" value="RIBOSOMAL RNA LARGE SUBUNIT METHYLTRANSFERASE G"/>
    <property type="match status" value="1"/>
</dbReference>
<dbReference type="PANTHER" id="PTHR47816">
    <property type="entry name" value="RIBOSOMAL RNA SMALL SUBUNIT METHYLTRANSFERASE C"/>
    <property type="match status" value="1"/>
</dbReference>
<dbReference type="Pfam" id="PF05175">
    <property type="entry name" value="MTS"/>
    <property type="match status" value="1"/>
</dbReference>
<dbReference type="PIRSF" id="PIRSF037565">
    <property type="entry name" value="RRNA_m2G_Mtase_RsmD_prd"/>
    <property type="match status" value="1"/>
</dbReference>
<dbReference type="SUPFAM" id="SSF53335">
    <property type="entry name" value="S-adenosyl-L-methionine-dependent methyltransferases"/>
    <property type="match status" value="1"/>
</dbReference>
<comment type="function">
    <text evidence="1">Specifically methylates the guanine in position 1835 (m2G1835) of 23S rRNA.</text>
</comment>
<comment type="catalytic activity">
    <reaction evidence="1">
        <text>guanosine(1835) in 23S rRNA + S-adenosyl-L-methionine = N(2)-methylguanosine(1835) in 23S rRNA + S-adenosyl-L-homocysteine + H(+)</text>
        <dbReference type="Rhea" id="RHEA:42744"/>
        <dbReference type="Rhea" id="RHEA-COMP:10217"/>
        <dbReference type="Rhea" id="RHEA-COMP:10218"/>
        <dbReference type="ChEBI" id="CHEBI:15378"/>
        <dbReference type="ChEBI" id="CHEBI:57856"/>
        <dbReference type="ChEBI" id="CHEBI:59789"/>
        <dbReference type="ChEBI" id="CHEBI:74269"/>
        <dbReference type="ChEBI" id="CHEBI:74481"/>
        <dbReference type="EC" id="2.1.1.174"/>
    </reaction>
</comment>
<comment type="subcellular location">
    <subcellularLocation>
        <location evidence="1">Cytoplasm</location>
    </subcellularLocation>
</comment>
<comment type="similarity">
    <text evidence="1">Belongs to the methyltransferase superfamily. RlmG family.</text>
</comment>
<protein>
    <recommendedName>
        <fullName evidence="1">Ribosomal RNA large subunit methyltransferase G</fullName>
        <ecNumber evidence="1">2.1.1.174</ecNumber>
    </recommendedName>
    <alternativeName>
        <fullName evidence="1">23S rRNA m2G1835 methyltransferase</fullName>
    </alternativeName>
    <alternativeName>
        <fullName evidence="1">rRNA (guanine-N(2)-)-methyltransferase RlmG</fullName>
    </alternativeName>
</protein>
<feature type="chain" id="PRO_0000366520" description="Ribosomal RNA large subunit methyltransferase G">
    <location>
        <begin position="1"/>
        <end position="419"/>
    </location>
</feature>
<feature type="region of interest" description="Disordered" evidence="2">
    <location>
        <begin position="386"/>
        <end position="419"/>
    </location>
</feature>
<feature type="compositionally biased region" description="Basic and acidic residues" evidence="2">
    <location>
        <begin position="386"/>
        <end position="408"/>
    </location>
</feature>
<feature type="compositionally biased region" description="Polar residues" evidence="2">
    <location>
        <begin position="409"/>
        <end position="419"/>
    </location>
</feature>
<evidence type="ECO:0000255" key="1">
    <source>
        <dbReference type="HAMAP-Rule" id="MF_01859"/>
    </source>
</evidence>
<evidence type="ECO:0000256" key="2">
    <source>
        <dbReference type="SAM" id="MobiDB-lite"/>
    </source>
</evidence>
<proteinExistence type="inferred from homology"/>
<name>RLMG_SHEWM</name>
<keyword id="KW-0963">Cytoplasm</keyword>
<keyword id="KW-0489">Methyltransferase</keyword>
<keyword id="KW-1185">Reference proteome</keyword>
<keyword id="KW-0698">rRNA processing</keyword>
<keyword id="KW-0949">S-adenosyl-L-methionine</keyword>
<keyword id="KW-0808">Transferase</keyword>
<accession>B1KD54</accession>
<sequence length="419" mass="46575">MTTQFSVAGIELELARYPKDQESNLQAWDAADEHLIKHLIETEQTPVVTAIINDNFGALTACLRSIAPTWPLMVETDAKTSLLGNLQNLATNNLSSEGIEWLNSREALPEQIELVLMKLPKNLTYFAHQLNRLSQVLPKGTQVLISAKAKSINKSVLELIGKNLGSASASLTWKKTRVITCISDGEIRSLPKEMQWSVPRLNLEIRNLSNVFAANKLDIGAEIMLENMPKGDFKSIIDLGCGNGILGLHAKQLFPQAYIHFVDDSEMAIESAKQNWALNKLDTQGLVGEQATFGWDDCLTHMSEGVRPDLVLCNPPFHQGEAITDHIAWQMFLQSWRALKNGGILHVVGNRHLAYHIKLQRIFKNCTTVASNGKFVILQAQKISKKAEPFETHPTEAEAKVEVTESKPHPQSSLYGTKK</sequence>
<organism>
    <name type="scientific">Shewanella woodyi (strain ATCC 51908 / MS32)</name>
    <dbReference type="NCBI Taxonomy" id="392500"/>
    <lineage>
        <taxon>Bacteria</taxon>
        <taxon>Pseudomonadati</taxon>
        <taxon>Pseudomonadota</taxon>
        <taxon>Gammaproteobacteria</taxon>
        <taxon>Alteromonadales</taxon>
        <taxon>Shewanellaceae</taxon>
        <taxon>Shewanella</taxon>
    </lineage>
</organism>
<gene>
    <name evidence="1" type="primary">rlmG</name>
    <name type="ordered locus">Swoo_3625</name>
</gene>